<protein>
    <recommendedName>
        <fullName evidence="7">Outer kinetochore KNL1 complex subunit KNL1</fullName>
    </recommendedName>
    <alternativeName>
        <fullName>Cancer susceptibility candidate gene 5 protein homolog</fullName>
    </alternativeName>
    <alternativeName>
        <fullName>Kinetochore scaffold 1</fullName>
    </alternativeName>
    <alternativeName>
        <fullName>Kinetochore-null protein 1</fullName>
    </alternativeName>
    <alternativeName>
        <fullName>Protein CASC5</fullName>
    </alternativeName>
</protein>
<name>KNL1_MOUSE</name>
<gene>
    <name evidence="8" type="primary">Knl1</name>
    <name type="synonym">Casc5</name>
</gene>
<dbReference type="EMBL" id="AL772264">
    <property type="status" value="NOT_ANNOTATED_CDS"/>
    <property type="molecule type" value="Genomic_DNA"/>
</dbReference>
<dbReference type="EMBL" id="BC080815">
    <property type="protein sequence ID" value="AAH80815.1"/>
    <property type="molecule type" value="mRNA"/>
</dbReference>
<dbReference type="EMBL" id="AK009772">
    <property type="protein sequence ID" value="BAB26494.1"/>
    <property type="molecule type" value="mRNA"/>
</dbReference>
<dbReference type="EMBL" id="AK033132">
    <property type="protein sequence ID" value="BAC28167.2"/>
    <property type="molecule type" value="mRNA"/>
</dbReference>
<dbReference type="CCDS" id="CCDS38203.1">
    <molecule id="Q66JQ7-1"/>
</dbReference>
<dbReference type="CCDS" id="CCDS89540.1">
    <molecule id="Q66JQ7-2"/>
</dbReference>
<dbReference type="RefSeq" id="NP_001349661.1">
    <molecule id="Q66JQ7-2"/>
    <property type="nucleotide sequence ID" value="NM_001362732.1"/>
</dbReference>
<dbReference type="RefSeq" id="NP_083893.2">
    <molecule id="Q66JQ7-1"/>
    <property type="nucleotide sequence ID" value="NM_029617.3"/>
</dbReference>
<dbReference type="RefSeq" id="XP_006500439.1">
    <molecule id="Q66JQ7-1"/>
    <property type="nucleotide sequence ID" value="XM_006500376.4"/>
</dbReference>
<dbReference type="RefSeq" id="XP_006500440.1">
    <molecule id="Q66JQ7-1"/>
    <property type="nucleotide sequence ID" value="XM_006500377.5"/>
</dbReference>
<dbReference type="SMR" id="Q66JQ7"/>
<dbReference type="ComplexPortal" id="CPX-5702">
    <property type="entry name" value="Kinetochore KNL1 complex"/>
</dbReference>
<dbReference type="FunCoup" id="Q66JQ7">
    <property type="interactions" value="1084"/>
</dbReference>
<dbReference type="IntAct" id="Q66JQ7">
    <property type="interactions" value="15"/>
</dbReference>
<dbReference type="MINT" id="Q66JQ7"/>
<dbReference type="STRING" id="10090.ENSMUSP00000028802"/>
<dbReference type="GlyGen" id="Q66JQ7">
    <property type="glycosylation" value="2 sites, 1 O-linked glycan (2 sites)"/>
</dbReference>
<dbReference type="iPTMnet" id="Q66JQ7"/>
<dbReference type="PhosphoSitePlus" id="Q66JQ7"/>
<dbReference type="jPOST" id="Q66JQ7"/>
<dbReference type="PaxDb" id="10090-ENSMUSP00000028802"/>
<dbReference type="ProteomicsDB" id="264789"/>
<dbReference type="ProteomicsDB" id="341109"/>
<dbReference type="Pumba" id="Q66JQ7"/>
<dbReference type="Antibodypedia" id="23122">
    <property type="antibodies" value="117 antibodies from 21 providers"/>
</dbReference>
<dbReference type="Ensembl" id="ENSMUST00000028799.12">
    <molecule id="Q66JQ7-2"/>
    <property type="protein sequence ID" value="ENSMUSP00000028799.6"/>
    <property type="gene ID" value="ENSMUSG00000027326.14"/>
</dbReference>
<dbReference type="Ensembl" id="ENSMUST00000028802.3">
    <molecule id="Q66JQ7-1"/>
    <property type="protein sequence ID" value="ENSMUSP00000028802.3"/>
    <property type="gene ID" value="ENSMUSG00000027326.14"/>
</dbReference>
<dbReference type="Ensembl" id="ENSMUST00000099542.9">
    <molecule id="Q66JQ7-1"/>
    <property type="protein sequence ID" value="ENSMUSP00000097140.3"/>
    <property type="gene ID" value="ENSMUSG00000027326.14"/>
</dbReference>
<dbReference type="GeneID" id="76464"/>
<dbReference type="UCSC" id="uc008ltb.1">
    <molecule id="Q66JQ7-1"/>
    <property type="organism name" value="mouse"/>
</dbReference>
<dbReference type="AGR" id="MGI:1923714"/>
<dbReference type="CTD" id="57082"/>
<dbReference type="MGI" id="MGI:1923714">
    <property type="gene designation" value="Knl1"/>
</dbReference>
<dbReference type="VEuPathDB" id="HostDB:ENSMUSG00000027326"/>
<dbReference type="eggNOG" id="ENOG502QW5H">
    <property type="taxonomic scope" value="Eukaryota"/>
</dbReference>
<dbReference type="GeneTree" id="ENSGT00410000025918"/>
<dbReference type="HOGENOM" id="CLU_001413_0_0_1"/>
<dbReference type="InParanoid" id="Q66JQ7"/>
<dbReference type="OMA" id="EITKCHA"/>
<dbReference type="OrthoDB" id="6132334at2759"/>
<dbReference type="TreeFam" id="TF335517"/>
<dbReference type="BioGRID-ORCS" id="76464">
    <property type="hits" value="23 hits in 80 CRISPR screens"/>
</dbReference>
<dbReference type="ChiTaRS" id="Knl1">
    <property type="organism name" value="mouse"/>
</dbReference>
<dbReference type="PRO" id="PR:Q66JQ7"/>
<dbReference type="Proteomes" id="UP000000589">
    <property type="component" value="Chromosome 2"/>
</dbReference>
<dbReference type="RNAct" id="Q66JQ7">
    <property type="molecule type" value="protein"/>
</dbReference>
<dbReference type="Bgee" id="ENSMUSG00000027326">
    <property type="expression patterns" value="Expressed in humerus cartilage element and 127 other cell types or tissues"/>
</dbReference>
<dbReference type="ExpressionAtlas" id="Q66JQ7">
    <property type="expression patterns" value="baseline and differential"/>
</dbReference>
<dbReference type="GO" id="GO:0005737">
    <property type="term" value="C:cytoplasm"/>
    <property type="evidence" value="ECO:0000314"/>
    <property type="project" value="UniProtKB"/>
</dbReference>
<dbReference type="GO" id="GO:0000776">
    <property type="term" value="C:kinetochore"/>
    <property type="evidence" value="ECO:0000314"/>
    <property type="project" value="UniProtKB"/>
</dbReference>
<dbReference type="GO" id="GO:0180019">
    <property type="term" value="C:Knl1/Spc105 complex"/>
    <property type="evidence" value="ECO:0000250"/>
    <property type="project" value="UniProtKB"/>
</dbReference>
<dbReference type="GO" id="GO:0005634">
    <property type="term" value="C:nucleus"/>
    <property type="evidence" value="ECO:0007669"/>
    <property type="project" value="UniProtKB-SubCell"/>
</dbReference>
<dbReference type="GO" id="GO:0008017">
    <property type="term" value="F:microtubule binding"/>
    <property type="evidence" value="ECO:0000250"/>
    <property type="project" value="UniProtKB"/>
</dbReference>
<dbReference type="GO" id="GO:0008608">
    <property type="term" value="P:attachment of spindle microtubules to kinetochore"/>
    <property type="evidence" value="ECO:0007669"/>
    <property type="project" value="InterPro"/>
</dbReference>
<dbReference type="GO" id="GO:0051301">
    <property type="term" value="P:cell division"/>
    <property type="evidence" value="ECO:0007669"/>
    <property type="project" value="UniProtKB-KW"/>
</dbReference>
<dbReference type="GO" id="GO:0007059">
    <property type="term" value="P:chromosome segregation"/>
    <property type="evidence" value="ECO:0000315"/>
    <property type="project" value="MGI"/>
</dbReference>
<dbReference type="GO" id="GO:0006974">
    <property type="term" value="P:DNA damage response"/>
    <property type="evidence" value="ECO:0000315"/>
    <property type="project" value="MGI"/>
</dbReference>
<dbReference type="GO" id="GO:0051649">
    <property type="term" value="P:establishment of localization in cell"/>
    <property type="evidence" value="ECO:0000315"/>
    <property type="project" value="MGI"/>
</dbReference>
<dbReference type="GO" id="GO:0060322">
    <property type="term" value="P:head development"/>
    <property type="evidence" value="ECO:0000315"/>
    <property type="project" value="MGI"/>
</dbReference>
<dbReference type="GO" id="GO:0031619">
    <property type="term" value="P:homologous chromosome orientation in meiotic metaphase I"/>
    <property type="evidence" value="ECO:0000315"/>
    <property type="project" value="UniProtKB"/>
</dbReference>
<dbReference type="GO" id="GO:0000070">
    <property type="term" value="P:mitotic sister chromatid segregation"/>
    <property type="evidence" value="ECO:0000250"/>
    <property type="project" value="UniProtKB"/>
</dbReference>
<dbReference type="GO" id="GO:0006909">
    <property type="term" value="P:phagocytosis"/>
    <property type="evidence" value="ECO:0000315"/>
    <property type="project" value="MGI"/>
</dbReference>
<dbReference type="GO" id="GO:1902167">
    <property type="term" value="P:positive regulation of intrinsic apoptotic signaling pathway in response to DNA damage by p53 class mediator"/>
    <property type="evidence" value="ECO:0000315"/>
    <property type="project" value="MGI"/>
</dbReference>
<dbReference type="GO" id="GO:1905326">
    <property type="term" value="P:positive regulation of meiosis I spindle assembly checkpoint"/>
    <property type="evidence" value="ECO:0000315"/>
    <property type="project" value="UniProtKB"/>
</dbReference>
<dbReference type="GO" id="GO:0034501">
    <property type="term" value="P:protein localization to kinetochore"/>
    <property type="evidence" value="ECO:0000266"/>
    <property type="project" value="MGI"/>
</dbReference>
<dbReference type="GO" id="GO:0090266">
    <property type="term" value="P:regulation of mitotic cell cycle spindle assembly checkpoint"/>
    <property type="evidence" value="ECO:0000250"/>
    <property type="project" value="UniProtKB"/>
</dbReference>
<dbReference type="CDD" id="cd22892">
    <property type="entry name" value="DRWD-C_Knl1"/>
    <property type="match status" value="1"/>
</dbReference>
<dbReference type="CDD" id="cd22817">
    <property type="entry name" value="DRWD-N_Knl1"/>
    <property type="match status" value="1"/>
</dbReference>
<dbReference type="CDD" id="cd21853">
    <property type="entry name" value="KNL1_NTD"/>
    <property type="match status" value="1"/>
</dbReference>
<dbReference type="InterPro" id="IPR037388">
    <property type="entry name" value="Blinkin"/>
</dbReference>
<dbReference type="InterPro" id="IPR043651">
    <property type="entry name" value="KNL1_MELT_rpt"/>
</dbReference>
<dbReference type="InterPro" id="IPR040850">
    <property type="entry name" value="Knl1_RWD_C"/>
</dbReference>
<dbReference type="PANTHER" id="PTHR16520">
    <property type="entry name" value="KINETOCHORE SCAFFOLD 1"/>
    <property type="match status" value="1"/>
</dbReference>
<dbReference type="PANTHER" id="PTHR16520:SF3">
    <property type="entry name" value="KINETOCHORE SCAFFOLD 1"/>
    <property type="match status" value="1"/>
</dbReference>
<dbReference type="Pfam" id="PF18210">
    <property type="entry name" value="Knl1_RWD_C"/>
    <property type="match status" value="1"/>
</dbReference>
<dbReference type="Pfam" id="PF19221">
    <property type="entry name" value="MELT"/>
    <property type="match status" value="9"/>
</dbReference>
<evidence type="ECO:0000250" key="1">
    <source>
        <dbReference type="UniProtKB" id="Q8NG31"/>
    </source>
</evidence>
<evidence type="ECO:0000255" key="2"/>
<evidence type="ECO:0000256" key="3">
    <source>
        <dbReference type="SAM" id="MobiDB-lite"/>
    </source>
</evidence>
<evidence type="ECO:0000269" key="4">
    <source>
    </source>
</evidence>
<evidence type="ECO:0000269" key="5">
    <source>
    </source>
</evidence>
<evidence type="ECO:0000269" key="6">
    <source>
    </source>
</evidence>
<evidence type="ECO:0000305" key="7"/>
<evidence type="ECO:0000312" key="8">
    <source>
        <dbReference type="MGI" id="MGI:1923714"/>
    </source>
</evidence>
<evidence type="ECO:0007744" key="9">
    <source>
    </source>
</evidence>
<reference key="1">
    <citation type="journal article" date="2009" name="PLoS Biol.">
        <title>Lineage-specific biology revealed by a finished genome assembly of the mouse.</title>
        <authorList>
            <person name="Church D.M."/>
            <person name="Goodstadt L."/>
            <person name="Hillier L.W."/>
            <person name="Zody M.C."/>
            <person name="Goldstein S."/>
            <person name="She X."/>
            <person name="Bult C.J."/>
            <person name="Agarwala R."/>
            <person name="Cherry J.L."/>
            <person name="DiCuccio M."/>
            <person name="Hlavina W."/>
            <person name="Kapustin Y."/>
            <person name="Meric P."/>
            <person name="Maglott D."/>
            <person name="Birtle Z."/>
            <person name="Marques A.C."/>
            <person name="Graves T."/>
            <person name="Zhou S."/>
            <person name="Teague B."/>
            <person name="Potamousis K."/>
            <person name="Churas C."/>
            <person name="Place M."/>
            <person name="Herschleb J."/>
            <person name="Runnheim R."/>
            <person name="Forrest D."/>
            <person name="Amos-Landgraf J."/>
            <person name="Schwartz D.C."/>
            <person name="Cheng Z."/>
            <person name="Lindblad-Toh K."/>
            <person name="Eichler E.E."/>
            <person name="Ponting C.P."/>
        </authorList>
    </citation>
    <scope>NUCLEOTIDE SEQUENCE [LARGE SCALE GENOMIC DNA]</scope>
    <source>
        <strain>C57BL/6J</strain>
    </source>
</reference>
<reference key="2">
    <citation type="journal article" date="2004" name="Genome Res.">
        <title>The status, quality, and expansion of the NIH full-length cDNA project: the Mammalian Gene Collection (MGC).</title>
        <authorList>
            <consortium name="The MGC Project Team"/>
        </authorList>
    </citation>
    <scope>NUCLEOTIDE SEQUENCE [LARGE SCALE MRNA] (ISOFORM 2)</scope>
    <source>
        <strain>C57BL/6J</strain>
        <tissue>Embryonic germ cell</tissue>
    </source>
</reference>
<reference key="3">
    <citation type="journal article" date="2005" name="Science">
        <title>The transcriptional landscape of the mammalian genome.</title>
        <authorList>
            <person name="Carninci P."/>
            <person name="Kasukawa T."/>
            <person name="Katayama S."/>
            <person name="Gough J."/>
            <person name="Frith M.C."/>
            <person name="Maeda N."/>
            <person name="Oyama R."/>
            <person name="Ravasi T."/>
            <person name="Lenhard B."/>
            <person name="Wells C."/>
            <person name="Kodzius R."/>
            <person name="Shimokawa K."/>
            <person name="Bajic V.B."/>
            <person name="Brenner S.E."/>
            <person name="Batalov S."/>
            <person name="Forrest A.R."/>
            <person name="Zavolan M."/>
            <person name="Davis M.J."/>
            <person name="Wilming L.G."/>
            <person name="Aidinis V."/>
            <person name="Allen J.E."/>
            <person name="Ambesi-Impiombato A."/>
            <person name="Apweiler R."/>
            <person name="Aturaliya R.N."/>
            <person name="Bailey T.L."/>
            <person name="Bansal M."/>
            <person name="Baxter L."/>
            <person name="Beisel K.W."/>
            <person name="Bersano T."/>
            <person name="Bono H."/>
            <person name="Chalk A.M."/>
            <person name="Chiu K.P."/>
            <person name="Choudhary V."/>
            <person name="Christoffels A."/>
            <person name="Clutterbuck D.R."/>
            <person name="Crowe M.L."/>
            <person name="Dalla E."/>
            <person name="Dalrymple B.P."/>
            <person name="de Bono B."/>
            <person name="Della Gatta G."/>
            <person name="di Bernardo D."/>
            <person name="Down T."/>
            <person name="Engstrom P."/>
            <person name="Fagiolini M."/>
            <person name="Faulkner G."/>
            <person name="Fletcher C.F."/>
            <person name="Fukushima T."/>
            <person name="Furuno M."/>
            <person name="Futaki S."/>
            <person name="Gariboldi M."/>
            <person name="Georgii-Hemming P."/>
            <person name="Gingeras T.R."/>
            <person name="Gojobori T."/>
            <person name="Green R.E."/>
            <person name="Gustincich S."/>
            <person name="Harbers M."/>
            <person name="Hayashi Y."/>
            <person name="Hensch T.K."/>
            <person name="Hirokawa N."/>
            <person name="Hill D."/>
            <person name="Huminiecki L."/>
            <person name="Iacono M."/>
            <person name="Ikeo K."/>
            <person name="Iwama A."/>
            <person name="Ishikawa T."/>
            <person name="Jakt M."/>
            <person name="Kanapin A."/>
            <person name="Katoh M."/>
            <person name="Kawasawa Y."/>
            <person name="Kelso J."/>
            <person name="Kitamura H."/>
            <person name="Kitano H."/>
            <person name="Kollias G."/>
            <person name="Krishnan S.P."/>
            <person name="Kruger A."/>
            <person name="Kummerfeld S.K."/>
            <person name="Kurochkin I.V."/>
            <person name="Lareau L.F."/>
            <person name="Lazarevic D."/>
            <person name="Lipovich L."/>
            <person name="Liu J."/>
            <person name="Liuni S."/>
            <person name="McWilliam S."/>
            <person name="Madan Babu M."/>
            <person name="Madera M."/>
            <person name="Marchionni L."/>
            <person name="Matsuda H."/>
            <person name="Matsuzawa S."/>
            <person name="Miki H."/>
            <person name="Mignone F."/>
            <person name="Miyake S."/>
            <person name="Morris K."/>
            <person name="Mottagui-Tabar S."/>
            <person name="Mulder N."/>
            <person name="Nakano N."/>
            <person name="Nakauchi H."/>
            <person name="Ng P."/>
            <person name="Nilsson R."/>
            <person name="Nishiguchi S."/>
            <person name="Nishikawa S."/>
            <person name="Nori F."/>
            <person name="Ohara O."/>
            <person name="Okazaki Y."/>
            <person name="Orlando V."/>
            <person name="Pang K.C."/>
            <person name="Pavan W.J."/>
            <person name="Pavesi G."/>
            <person name="Pesole G."/>
            <person name="Petrovsky N."/>
            <person name="Piazza S."/>
            <person name="Reed J."/>
            <person name="Reid J.F."/>
            <person name="Ring B.Z."/>
            <person name="Ringwald M."/>
            <person name="Rost B."/>
            <person name="Ruan Y."/>
            <person name="Salzberg S.L."/>
            <person name="Sandelin A."/>
            <person name="Schneider C."/>
            <person name="Schoenbach C."/>
            <person name="Sekiguchi K."/>
            <person name="Semple C.A."/>
            <person name="Seno S."/>
            <person name="Sessa L."/>
            <person name="Sheng Y."/>
            <person name="Shibata Y."/>
            <person name="Shimada H."/>
            <person name="Shimada K."/>
            <person name="Silva D."/>
            <person name="Sinclair B."/>
            <person name="Sperling S."/>
            <person name="Stupka E."/>
            <person name="Sugiura K."/>
            <person name="Sultana R."/>
            <person name="Takenaka Y."/>
            <person name="Taki K."/>
            <person name="Tammoja K."/>
            <person name="Tan S.L."/>
            <person name="Tang S."/>
            <person name="Taylor M.S."/>
            <person name="Tegner J."/>
            <person name="Teichmann S.A."/>
            <person name="Ueda H.R."/>
            <person name="van Nimwegen E."/>
            <person name="Verardo R."/>
            <person name="Wei C.L."/>
            <person name="Yagi K."/>
            <person name="Yamanishi H."/>
            <person name="Zabarovsky E."/>
            <person name="Zhu S."/>
            <person name="Zimmer A."/>
            <person name="Hide W."/>
            <person name="Bult C."/>
            <person name="Grimmond S.M."/>
            <person name="Teasdale R.D."/>
            <person name="Liu E.T."/>
            <person name="Brusic V."/>
            <person name="Quackenbush J."/>
            <person name="Wahlestedt C."/>
            <person name="Mattick J.S."/>
            <person name="Hume D.A."/>
            <person name="Kai C."/>
            <person name="Sasaki D."/>
            <person name="Tomaru Y."/>
            <person name="Fukuda S."/>
            <person name="Kanamori-Katayama M."/>
            <person name="Suzuki M."/>
            <person name="Aoki J."/>
            <person name="Arakawa T."/>
            <person name="Iida J."/>
            <person name="Imamura K."/>
            <person name="Itoh M."/>
            <person name="Kato T."/>
            <person name="Kawaji H."/>
            <person name="Kawagashira N."/>
            <person name="Kawashima T."/>
            <person name="Kojima M."/>
            <person name="Kondo S."/>
            <person name="Konno H."/>
            <person name="Nakano K."/>
            <person name="Ninomiya N."/>
            <person name="Nishio T."/>
            <person name="Okada M."/>
            <person name="Plessy C."/>
            <person name="Shibata K."/>
            <person name="Shiraki T."/>
            <person name="Suzuki S."/>
            <person name="Tagami M."/>
            <person name="Waki K."/>
            <person name="Watahiki A."/>
            <person name="Okamura-Oho Y."/>
            <person name="Suzuki H."/>
            <person name="Kawai J."/>
            <person name="Hayashizaki Y."/>
        </authorList>
    </citation>
    <scope>NUCLEOTIDE SEQUENCE [LARGE SCALE MRNA] OF 1-507</scope>
    <source>
        <strain>C57BL/6J</strain>
        <tissue>Testis</tissue>
        <tissue>Tongue</tissue>
    </source>
</reference>
<reference key="4">
    <citation type="journal article" date="2010" name="Cell">
        <title>A tissue-specific atlas of mouse protein phosphorylation and expression.</title>
        <authorList>
            <person name="Huttlin E.L."/>
            <person name="Jedrychowski M.P."/>
            <person name="Elias J.E."/>
            <person name="Goswami T."/>
            <person name="Rad R."/>
            <person name="Beausoleil S.A."/>
            <person name="Villen J."/>
            <person name="Haas W."/>
            <person name="Sowa M.E."/>
            <person name="Gygi S.P."/>
        </authorList>
    </citation>
    <scope>PHOSPHORYLATION [LARGE SCALE ANALYSIS] AT SER-794</scope>
    <scope>IDENTIFICATION BY MASS SPECTROMETRY [LARGE SCALE ANALYSIS]</scope>
    <source>
        <tissue>Spleen</tissue>
    </source>
</reference>
<reference key="5">
    <citation type="journal article" date="2022" name="FASEB J.">
        <title>Kinetochore scaffold 1 regulates SAC function during mouse oocyte meiotic maturation.</title>
        <authorList>
            <person name="Yue W."/>
            <person name="Wang Y."/>
            <person name="Meng T.G."/>
            <person name="Zhang H.Y."/>
            <person name="Zhang X.R."/>
            <person name="Ouyang Y.C."/>
            <person name="Hou Y."/>
            <person name="Schatten H."/>
            <person name="Wang Z.B."/>
            <person name="Sun Q.Y."/>
        </authorList>
    </citation>
    <scope>FUNCTION</scope>
    <scope>SUBCELLULAR LOCATION</scope>
    <scope>TISSUE SPECIFICITY</scope>
</reference>
<reference key="6">
    <citation type="journal article" date="2023" name="Sensors (Basel)">
        <title>The Loss-Function of KNL1 Causes Oligospermia and Asthenospermia in Mice by Affecting the Assembly and Separation of the Spindle through Flow Cytometry and Immunofluorescence.</title>
        <authorList>
            <person name="Zhao Y."/>
            <person name="Yang J."/>
            <person name="Lu D."/>
            <person name="Zhu Y."/>
            <person name="Liao K."/>
            <person name="Tian Y."/>
            <person name="Yin R."/>
        </authorList>
    </citation>
    <scope>FUNCTION</scope>
    <scope>TISSUE SPECIFICITY</scope>
</reference>
<accession>Q66JQ7</accession>
<accession>A3KGI3</accession>
<accession>A3KGI4</accession>
<accession>Q8CCH6</accession>
<accession>Q9CV38</accession>
<organism>
    <name type="scientific">Mus musculus</name>
    <name type="common">Mouse</name>
    <dbReference type="NCBI Taxonomy" id="10090"/>
    <lineage>
        <taxon>Eukaryota</taxon>
        <taxon>Metazoa</taxon>
        <taxon>Chordata</taxon>
        <taxon>Craniata</taxon>
        <taxon>Vertebrata</taxon>
        <taxon>Euteleostomi</taxon>
        <taxon>Mammalia</taxon>
        <taxon>Eutheria</taxon>
        <taxon>Euarchontoglires</taxon>
        <taxon>Glires</taxon>
        <taxon>Rodentia</taxon>
        <taxon>Myomorpha</taxon>
        <taxon>Muroidea</taxon>
        <taxon>Muridae</taxon>
        <taxon>Murinae</taxon>
        <taxon>Mus</taxon>
        <taxon>Mus</taxon>
    </lineage>
</organism>
<feature type="chain" id="PRO_0000235983" description="Outer kinetochore KNL1 complex subunit KNL1">
    <location>
        <begin position="1"/>
        <end position="2119"/>
    </location>
</feature>
<feature type="repeat" description="1">
    <location>
        <begin position="723"/>
        <end position="827"/>
    </location>
</feature>
<feature type="repeat" description="2">
    <location>
        <begin position="923"/>
        <end position="1027"/>
    </location>
</feature>
<feature type="region of interest" description="May mediate oligomerization" evidence="1">
    <location>
        <begin position="1"/>
        <end position="202"/>
    </location>
</feature>
<feature type="region of interest" description="Disordered" evidence="3">
    <location>
        <begin position="1"/>
        <end position="59"/>
    </location>
</feature>
<feature type="region of interest" description="Interaction with microtubules" evidence="1">
    <location>
        <begin position="17"/>
        <end position="34"/>
    </location>
</feature>
<feature type="region of interest" description="Interaction with PP1CA; contains the protein phosphatase 1 (PP1) interaction motifs SILK, RVXF and phi-phi" evidence="1">
    <location>
        <begin position="23"/>
        <end position="80"/>
    </location>
</feature>
<feature type="region of interest" description="Interaction with microtubules" evidence="1">
    <location>
        <begin position="53"/>
        <end position="80"/>
    </location>
</feature>
<feature type="region of interest" description="Interaction with BUB1" evidence="1">
    <location>
        <begin position="124"/>
        <end position="140"/>
    </location>
</feature>
<feature type="region of interest" description="Interaction with BUB1B" evidence="1">
    <location>
        <begin position="160"/>
        <end position="179"/>
    </location>
</feature>
<feature type="region of interest" description="2 X 104 AA approximate repeats">
    <location>
        <begin position="723"/>
        <end position="1027"/>
    </location>
</feature>
<feature type="region of interest" description="Disordered" evidence="3">
    <location>
        <begin position="1557"/>
        <end position="1583"/>
    </location>
</feature>
<feature type="region of interest" description="Required for interaction with ZWINT" evidence="1">
    <location>
        <begin position="1763"/>
        <end position="1890"/>
    </location>
</feature>
<feature type="region of interest" description="Interaction with NSL1, DSN1 and required for assembly into the outer kinetochore" evidence="1">
    <location>
        <begin position="1873"/>
        <end position="2093"/>
    </location>
</feature>
<feature type="coiled-coil region" evidence="2">
    <location>
        <begin position="1799"/>
        <end position="1890"/>
    </location>
</feature>
<feature type="short sequence motif" description="Nuclear localization signal" evidence="2">
    <location>
        <begin position="1577"/>
        <end position="1590"/>
    </location>
</feature>
<feature type="compositionally biased region" description="Basic and acidic residues" evidence="3">
    <location>
        <begin position="1566"/>
        <end position="1583"/>
    </location>
</feature>
<feature type="modified residue" description="Phosphoserine" evidence="1">
    <location>
        <position position="24"/>
    </location>
</feature>
<feature type="modified residue" description="Phosphoserine" evidence="1">
    <location>
        <position position="32"/>
    </location>
</feature>
<feature type="modified residue" description="Phosphoserine" evidence="1">
    <location>
        <position position="60"/>
    </location>
</feature>
<feature type="modified residue" description="Phosphoserine" evidence="1">
    <location>
        <position position="538"/>
    </location>
</feature>
<feature type="modified residue" description="Phosphothreonine" evidence="1">
    <location>
        <position position="540"/>
    </location>
</feature>
<feature type="modified residue" description="Phosphothreonine" evidence="1">
    <location>
        <position position="739"/>
    </location>
</feature>
<feature type="modified residue" description="Phosphoserine" evidence="9">
    <location>
        <position position="794"/>
    </location>
</feature>
<feature type="modified residue" description="Phosphoserine" evidence="1">
    <location>
        <position position="878"/>
    </location>
</feature>
<feature type="modified residue" description="Phosphoserine" evidence="1">
    <location>
        <position position="1243"/>
    </location>
</feature>
<feature type="modified residue" description="Phosphoserine" evidence="1">
    <location>
        <position position="1464"/>
    </location>
</feature>
<feature type="modified residue" description="Phosphoserine" evidence="1">
    <location>
        <position position="1616"/>
    </location>
</feature>
<feature type="modified residue" description="Phosphoserine" evidence="1">
    <location>
        <position position="1627"/>
    </location>
</feature>
<feature type="modified residue" description="Phosphoserine" evidence="1">
    <location>
        <position position="1642"/>
    </location>
</feature>
<feature type="splice variant" id="VSP_062424" description="In isoform 2." evidence="4">
    <original>IFDNHMEEDINK</original>
    <variation>VSCLEPKNVLEF</variation>
    <location>
        <begin position="1601"/>
        <end position="1612"/>
    </location>
</feature>
<feature type="splice variant" id="VSP_062425" description="In isoform 2." evidence="4">
    <location>
        <begin position="1613"/>
        <end position="2119"/>
    </location>
</feature>
<feature type="sequence conflict" description="In Ref. 2; AAH80815." evidence="7" ref="2">
    <original>D</original>
    <variation>G</variation>
    <location>
        <position position="128"/>
    </location>
</feature>
<feature type="sequence conflict" description="In Ref. 2; AAH80815." evidence="7" ref="2">
    <original>H</original>
    <variation>R</variation>
    <location>
        <position position="375"/>
    </location>
</feature>
<feature type="sequence conflict" description="In Ref. 2; AAH80815." evidence="7" ref="2">
    <original>P</original>
    <variation>L</variation>
    <location>
        <position position="1151"/>
    </location>
</feature>
<keyword id="KW-0025">Alternative splicing</keyword>
<keyword id="KW-0131">Cell cycle</keyword>
<keyword id="KW-0132">Cell division</keyword>
<keyword id="KW-0137">Centromere</keyword>
<keyword id="KW-0158">Chromosome</keyword>
<keyword id="KW-0159">Chromosome partition</keyword>
<keyword id="KW-0175">Coiled coil</keyword>
<keyword id="KW-0963">Cytoplasm</keyword>
<keyword id="KW-0995">Kinetochore</keyword>
<keyword id="KW-0498">Mitosis</keyword>
<keyword id="KW-0539">Nucleus</keyword>
<keyword id="KW-0597">Phosphoprotein</keyword>
<keyword id="KW-1185">Reference proteome</keyword>
<keyword id="KW-0677">Repeat</keyword>
<sequence length="2119" mass="238185">MDGVYSEANEENDNTQRPVRRQHSSILKPPRSPLQDLKCGNQTNQEPNPPRKRKSSRRVSFADTIKVFQTESHMKTERNSEISGMNTLLCAPIQTQMQQKEFSITDCNHERKHANDQTVIFSDENQMDLTASHTVMITKGLSDCTKNENSTKIDTTSFLENLKHHAANSRIKKDLACSTVSLSQNIFSEKINSDNFIKRLKTGKHISSSTELDKENAEIPVYSKDSNSASSTYQMHASLGVDENSSNRTRIFREQDDGMNLTQCHTACIKTWIPPSTEAKIGEFKGDKTIYGNECMELTTNYTIQVLSSENNLSERETQTQNGMNVTTVDGATAPAPEKKTALKDKLNAAFQGSFPNPENKIHIIKCHPIESETHTVTQISSQSASTLAVTSKSICSSPAIEGYKTIFHSSSNDAMELTKCLSAMEEEKKLLKADDKYSKICTNPDAGPLREKTIYLEEDSMDITKSHTVAIDNKIFKHDQENIKKEIIAIPIFEKEMVLRNLMPMSKDEKRDVNYISVPQVSKESLQRSQTNTLSVSLTDKKMEFLADEDMDLTKSHTTKLSQVIPTTFDLASKNVTKSYSHSKSPLNEWESLDKQVVLGQHSKLPLPQRKDRDDPDCSHHKIMYSEELQTMDLTKSHTIVIGFGPSEVQEHSKINLEHKNSQLTAESIQTAVNVPAANSRVVTTNDMDMLKDRSTHKPELLKEKQNIKIYGRKSIGRLKIDKTILFSEGNEGDMDITKSCTVKINHRSLLDKHDSHLVSLAGTSKTILHARGQVEMEINRSHTTPLECKIISPSDITPGDLDKTMMSIDDHEELDMTKSHTVFIDYQAEAKGVLPDRLDFQLSKKESLQKPKVTSLAEEIYISKNSESNHLPAKGSQLTILEEGSNSGLGEETNDAQKPGFLNELLSGKTQRRKSLSLKNKSITFPENDKSYREIPQSSAVEINNETRLEDRKGFSFVPLAGTSKPVLSAYGPEDMEISIGQTTASEYKTVPPEEITTIPMDKTVMFVDNFGDLDVTRSHTVFIDCQAKEKVLDEYTNLGIQKTKTLSGSEGDTHIQEITKNPAAQHKHHMTTVIPSSTVVSDQSSMKIKFHKADRDEEVKGKEVEANMLKQTKPESCLLNITDGKNVDFTSSYTADVCRSSDKYSSLPNISSSDNSGGNTMSLCDKNKEKAYNCQVPNEFTYAAILPSTYHMDSKKLSVFPPCPSKEVTQTESAIALLKDEDPVEEPLGEMATFNSKHVSLNLAKDQTEAFVDVSVASQPHLSAQQSPSTQKGQDVARRDEGILAKAGKKALPFLLENVAASTWENESKIPTNVEHFAVTYEKELSISIQTDKCNTNVQSPSNSALTTQVIQTHANAEGALDFLVPSTVSCFSSTKPSLSNLNRKTEEVLDFQTVNLLPPAEQLLEEGSQAHSMSIVQATEIYRLGSRNDRDEESKTFCNEAETTSVPLKTAVKDKTRRCSLGIFLPKLPSKRSCSITGVDDLEQILADAADLTQLETQPVCSKDPGIGSVAAKLNLSPSQFINEENLPVYPGEILSSDSVSLDIEESVLIDTSQRESLPSENKTENCRAQKRTRVEENDVTNEKKIRTHDSAQDQEIFDNHMEEDINKNVNSVLLKSLSRTPSSCSSSLDSIKSDGLSLDVSTQRNSQMESQFLGDTISEESLKEKLKDGQITIKEFFILLQVHILIQKPRQSTLPAKFTINTLPTTEDLMLRQYVYGPRIQIYKEDCELLRQKIDELKISALNQNKLLADVNRNLWEKVKDYSDEELKNYGIYLNKIKSRYTKMTKVFNHQGKVALYNKLVHSAENEKNKLQIKINEMDTILKKINNCLAEVETETKNLENEEKNDAMEEWDSEMRDAEKELEQLKTEEEELQRKFLEVETQKTQTLAQIEFIKEQTTKTEELLDQLSLSEWDVIEWSDDQAVFTFVYDSIELIITFGEPLVGLPFLDKACRKINALSFQSLLDEDKAPPSSLLVHKLIFQYIEEQESWKKKCTAQHQVPQMLQELSLVVNHCRLLGEEIEFLKRWGPNYSLMHINVNNTELRLLFSSCAAFAKFEITLSPSAHYPLVPLPFTIHNHIGKTGHDEIAAIISKVPLEENYLKNVVKQIYQDLLKD</sequence>
<comment type="function">
    <text evidence="1 5 6">Acts as a component of the outer kinetochore KNL1 complex that serves as a docking point for spindle assembly checkpoint components and mediates microtubule-kinetochore interactions. Kinetochores, consisting of a centromere-associated inner segment and a microtubule-contacting outer segment, play a crucial role in chromosome segregation by mediating the physical connection between centromeric DNA and spindle microtubules. The outer kinetochore is made up of the ten-subunit KMN network, comprising the MIS12, NDC80 and KNL1 complexes, and auxiliary microtubule-associated components; together they connect the outer kinetochore with the inner kinetochore, bind microtubules, and mediate interactions with mitotic checkpoint proteins that delay anaphase until chromosomes are bioriented on the spindle. Required for kinetochore binding by a distinct subset of kMAPs (kinetochore-bound microtubule-associated proteins) and motors. Acts in coordination with CENPK to recruit the NDC80 complex to the outer kinetochore. Can bind either to microtubules or to the protein phosphatase 1 (PP1) catalytic subunits PPP1CA and PPP1CC (via overlapping binding sites), it has higher affinity for PP1. Recruits MAD2L1 to the kinetochore and also directly links BUB1 and BUB1B to the kinetochore (By similarity). In addition to orienting mitotic chromosomes, it is also essential for alignment of homologous chromosomes during meiotic metaphase I (PubMed:35167144, PubMed:36904774). In meiosis I, required to activate the spindle assembly checkpoint at unattached kinetochores to correct erroneous kinetochore-microtubule attachments (PubMed:35167144, PubMed:36904774).</text>
</comment>
<comment type="subunit">
    <text evidence="1">Component of the KNL1 complex composed of KNL1 and ZWINT. Part of the ten-subunit outer kinetochore KMN network that includes the KNL1, MIS12 and NDC80 complexes; a bioriented kinetochore contains approximately 150 copies of the network. Interacts (via C-terminus) with the MIS12 complex subunits NSL1 (via C-terminus), PMF1 and DSN1; the interaction is direct. Interacts (via N-terminal region) with BUB1B (via BUB1 N-terminal domain); the interaction is direct and is required for cell cycle arrest upon activation of the mitotic spindle assembly checkpoint. Interacts (via N-terminal region) with BUB1 (via BUB1 N-terminal domain); the interaction is direct. Interacts with the protein phosphatase PP1 subunit PPP1CA; the interaction is direct and mutually exclusive with binding to microtubules. Interacts with the protein phosphatase PP1 subunit PPP1CC; the interaction is direct and mutually exclusive with binding to microtubules.</text>
</comment>
<comment type="subcellular location">
    <subcellularLocation>
        <location evidence="1">Nucleus</location>
    </subcellularLocation>
    <subcellularLocation>
        <location evidence="5">Chromosome</location>
        <location evidence="5">Centromere</location>
        <location evidence="5">Kinetochore</location>
    </subcellularLocation>
    <subcellularLocation>
        <location evidence="5">Cytoplasm</location>
    </subcellularLocation>
    <text evidence="1 5">Weakly expressed in interphase nuclei. Expression increases from prophase to late anaphase, but greatly diminishes from the telophase and cytokinesis to early G1 phase of cell cycle (By similarity). Localizes to the cytoplasm during meiotic prophase I and then the nucleus as meiosis progresses (PubMed:35167144).</text>
</comment>
<comment type="alternative products">
    <event type="alternative splicing"/>
    <isoform>
        <id>Q66JQ7-1</id>
        <name>1</name>
        <sequence type="displayed"/>
    </isoform>
    <isoform>
        <id>Q66JQ7-2</id>
        <name>2</name>
        <sequence type="described" ref="VSP_062424 VSP_062425"/>
    </isoform>
</comment>
<comment type="tissue specificity">
    <text evidence="5 6">Expressed in oocytes during meiotic progression (at protein level) (PubMed:35167144). Expressed during spermatogenesis (PubMed:36904774).</text>
</comment>
<comment type="PTM">
    <text evidence="1">Phosphorylation by AURKB negatively regulates its interaction with protein phosphatase 1 (PP1) subunit PPP1CA and with microtubules.</text>
</comment>
<proteinExistence type="evidence at protein level"/>